<accession>Q9H832</accession>
<accession>A6N8M6</accession>
<accession>A6NC60</accession>
<accession>Q7L354</accession>
<accession>Q8TCM4</accession>
<accession>Q9H893</accession>
<feature type="chain" id="PRO_0000280515" description="Ubiquitin-conjugating enzyme E2 Z">
    <location>
        <begin position="1"/>
        <end position="354"/>
    </location>
</feature>
<feature type="domain" description="UBC core" evidence="2">
    <location>
        <begin position="99"/>
        <end position="253"/>
    </location>
</feature>
<feature type="region of interest" description="Disordered" evidence="3">
    <location>
        <begin position="1"/>
        <end position="21"/>
    </location>
</feature>
<feature type="region of interest" description="Disordered" evidence="3">
    <location>
        <begin position="332"/>
        <end position="354"/>
    </location>
</feature>
<feature type="active site" description="Glycyl thioester intermediate" evidence="2">
    <location>
        <position position="188"/>
    </location>
</feature>
<feature type="modified residue" description="Phosphoserine" evidence="1">
    <location>
        <position position="337"/>
    </location>
</feature>
<feature type="splice variant" id="VSP_023747" description="In isoform 2." evidence="7">
    <location>
        <begin position="1"/>
        <end position="108"/>
    </location>
</feature>
<feature type="helix" evidence="9">
    <location>
        <begin position="102"/>
        <end position="113"/>
    </location>
</feature>
<feature type="strand" evidence="9">
    <location>
        <begin position="119"/>
        <end position="123"/>
    </location>
</feature>
<feature type="strand" evidence="9">
    <location>
        <begin position="130"/>
        <end position="136"/>
    </location>
</feature>
<feature type="turn" evidence="9">
    <location>
        <begin position="142"/>
        <end position="145"/>
    </location>
</feature>
<feature type="strand" evidence="9">
    <location>
        <begin position="147"/>
        <end position="153"/>
    </location>
</feature>
<feature type="turn" evidence="9">
    <location>
        <begin position="156"/>
        <end position="159"/>
    </location>
</feature>
<feature type="strand" evidence="9">
    <location>
        <begin position="164"/>
        <end position="167"/>
    </location>
</feature>
<feature type="turn" evidence="9">
    <location>
        <begin position="171"/>
        <end position="174"/>
    </location>
</feature>
<feature type="strand" evidence="9">
    <location>
        <begin position="185"/>
        <end position="187"/>
    </location>
</feature>
<feature type="helix" evidence="9">
    <location>
        <begin position="190"/>
        <end position="192"/>
    </location>
</feature>
<feature type="strand" evidence="9">
    <location>
        <begin position="194"/>
        <end position="198"/>
    </location>
</feature>
<feature type="helix" evidence="9">
    <location>
        <begin position="206"/>
        <end position="216"/>
    </location>
</feature>
<feature type="helix" evidence="9">
    <location>
        <begin position="221"/>
        <end position="224"/>
    </location>
</feature>
<feature type="turn" evidence="9">
    <location>
        <begin position="226"/>
        <end position="229"/>
    </location>
</feature>
<feature type="helix" evidence="9">
    <location>
        <begin position="236"/>
        <end position="251"/>
    </location>
</feature>
<feature type="helix" evidence="9">
    <location>
        <begin position="254"/>
        <end position="257"/>
    </location>
</feature>
<feature type="helix" evidence="9">
    <location>
        <begin position="265"/>
        <end position="277"/>
    </location>
</feature>
<feature type="helix" evidence="9">
    <location>
        <begin position="279"/>
        <end position="287"/>
    </location>
</feature>
<feature type="helix" evidence="9">
    <location>
        <begin position="288"/>
        <end position="292"/>
    </location>
</feature>
<feature type="helix" evidence="9">
    <location>
        <begin position="310"/>
        <end position="325"/>
    </location>
</feature>
<protein>
    <recommendedName>
        <fullName>Ubiquitin-conjugating enzyme E2 Z</fullName>
        <ecNumber>2.3.2.23</ecNumber>
    </recommendedName>
    <alternativeName>
        <fullName>E2 ubiquitin-conjugating enzyme Z</fullName>
    </alternativeName>
    <alternativeName>
        <fullName>Uba6-specific E2 conjugating enzyme 1</fullName>
        <shortName>Use1</shortName>
    </alternativeName>
    <alternativeName>
        <fullName>Ubiquitin carrier protein Z</fullName>
    </alternativeName>
    <alternativeName>
        <fullName>Ubiquitin-protein ligase Z</fullName>
    </alternativeName>
</protein>
<evidence type="ECO:0000250" key="1">
    <source>
        <dbReference type="UniProtKB" id="Q3UE37"/>
    </source>
</evidence>
<evidence type="ECO:0000255" key="2">
    <source>
        <dbReference type="PROSITE-ProRule" id="PRU00388"/>
    </source>
</evidence>
<evidence type="ECO:0000256" key="3">
    <source>
        <dbReference type="SAM" id="MobiDB-lite"/>
    </source>
</evidence>
<evidence type="ECO:0000269" key="4">
    <source>
    </source>
</evidence>
<evidence type="ECO:0000269" key="5">
    <source>
    </source>
</evidence>
<evidence type="ECO:0000269" key="6">
    <source>
    </source>
</evidence>
<evidence type="ECO:0000303" key="7">
    <source>
    </source>
</evidence>
<evidence type="ECO:0000305" key="8"/>
<evidence type="ECO:0007829" key="9">
    <source>
        <dbReference type="PDB" id="5A4P"/>
    </source>
</evidence>
<sequence>MAESPTEEAATAGAGAAGPGASSVAGVVGVSGSGGGFGPPFLPDVWAAAAAAGGAGGPGSGLAPLPGLPPSAAAHGAALLSHWDPTLSSDWDGERTAPQCLLRIKRDIMSIYKEPPPGMFVVPDTVDMTKIHALITGPFDTPYEGGFFLFVFRCPPDYPIHPPRVKLMTTGNNTVRFNPNFYRNGKVCLSILGTWTGPAWSPAQSISSVLISIQSLMTENPYHNEPGFEQERHPGDSKNYNECIRHETIRVAVCDMMEGKCPCPEPLRGVMEKSFLEYYDFYEVACKDRLHLQGQTMQDPFGEKRGHFDYQSLLMRLGLIRQKVLERLHNENAEMDSDSSSSGTETDLHGSLRV</sequence>
<organism>
    <name type="scientific">Homo sapiens</name>
    <name type="common">Human</name>
    <dbReference type="NCBI Taxonomy" id="9606"/>
    <lineage>
        <taxon>Eukaryota</taxon>
        <taxon>Metazoa</taxon>
        <taxon>Chordata</taxon>
        <taxon>Craniata</taxon>
        <taxon>Vertebrata</taxon>
        <taxon>Euteleostomi</taxon>
        <taxon>Mammalia</taxon>
        <taxon>Eutheria</taxon>
        <taxon>Euarchontoglires</taxon>
        <taxon>Primates</taxon>
        <taxon>Haplorrhini</taxon>
        <taxon>Catarrhini</taxon>
        <taxon>Hominidae</taxon>
        <taxon>Homo</taxon>
    </lineage>
</organism>
<dbReference type="EC" id="2.3.2.23"/>
<dbReference type="EMBL" id="EF623992">
    <property type="protein sequence ID" value="ABR25252.1"/>
    <property type="molecule type" value="mRNA"/>
</dbReference>
<dbReference type="EMBL" id="AK023917">
    <property type="protein sequence ID" value="BAB14724.1"/>
    <property type="status" value="ALT_INIT"/>
    <property type="molecule type" value="mRNA"/>
</dbReference>
<dbReference type="EMBL" id="AK024030">
    <property type="protein sequence ID" value="BAB14789.1"/>
    <property type="molecule type" value="mRNA"/>
</dbReference>
<dbReference type="EMBL" id="AC091133">
    <property type="status" value="NOT_ANNOTATED_CDS"/>
    <property type="molecule type" value="Genomic_DNA"/>
</dbReference>
<dbReference type="EMBL" id="CH471109">
    <property type="protein sequence ID" value="EAW94703.1"/>
    <property type="molecule type" value="Genomic_DNA"/>
</dbReference>
<dbReference type="EMBL" id="BC015169">
    <property type="protein sequence ID" value="AAH15169.2"/>
    <property type="molecule type" value="mRNA"/>
</dbReference>
<dbReference type="EMBL" id="BC015890">
    <property type="protein sequence ID" value="AAH15890.1"/>
    <property type="status" value="ALT_INIT"/>
    <property type="molecule type" value="mRNA"/>
</dbReference>
<dbReference type="EMBL" id="AB025426">
    <property type="protein sequence ID" value="BAB87810.1"/>
    <property type="molecule type" value="mRNA"/>
</dbReference>
<dbReference type="EMBL" id="CR457322">
    <property type="protein sequence ID" value="CAG33603.1"/>
    <property type="molecule type" value="mRNA"/>
</dbReference>
<dbReference type="EMBL" id="AL713782">
    <property type="protein sequence ID" value="CAD28542.1"/>
    <property type="molecule type" value="mRNA"/>
</dbReference>
<dbReference type="CCDS" id="CCDS11540.2">
    <molecule id="Q9H832-1"/>
</dbReference>
<dbReference type="RefSeq" id="NP_075567.2">
    <molecule id="Q9H832-1"/>
    <property type="nucleotide sequence ID" value="NM_023079.5"/>
</dbReference>
<dbReference type="PDB" id="5A4P">
    <property type="method" value="X-ray"/>
    <property type="resolution" value="2.10 A"/>
    <property type="chains" value="A=1-354"/>
</dbReference>
<dbReference type="PDBsum" id="5A4P"/>
<dbReference type="SMR" id="Q9H832"/>
<dbReference type="BioGRID" id="122419">
    <property type="interactions" value="82"/>
</dbReference>
<dbReference type="FunCoup" id="Q9H832">
    <property type="interactions" value="4952"/>
</dbReference>
<dbReference type="IntAct" id="Q9H832">
    <property type="interactions" value="46"/>
</dbReference>
<dbReference type="MINT" id="Q9H832"/>
<dbReference type="STRING" id="9606.ENSP00000354201"/>
<dbReference type="GlyGen" id="Q9H832">
    <property type="glycosylation" value="1 site, 1 O-linked glycan (1 site)"/>
</dbReference>
<dbReference type="iPTMnet" id="Q9H832"/>
<dbReference type="PhosphoSitePlus" id="Q9H832"/>
<dbReference type="SwissPalm" id="Q9H832"/>
<dbReference type="BioMuta" id="UBE2Z"/>
<dbReference type="DMDM" id="134035344"/>
<dbReference type="jPOST" id="Q9H832"/>
<dbReference type="MassIVE" id="Q9H832"/>
<dbReference type="PaxDb" id="9606-ENSP00000354201"/>
<dbReference type="PeptideAtlas" id="Q9H832"/>
<dbReference type="ProteomicsDB" id="81173">
    <molecule id="Q9H832-1"/>
</dbReference>
<dbReference type="ProteomicsDB" id="81174">
    <molecule id="Q9H832-2"/>
</dbReference>
<dbReference type="Pumba" id="Q9H832"/>
<dbReference type="Antibodypedia" id="2025">
    <property type="antibodies" value="204 antibodies from 29 providers"/>
</dbReference>
<dbReference type="DNASU" id="65264"/>
<dbReference type="Ensembl" id="ENST00000360943.10">
    <molecule id="Q9H832-1"/>
    <property type="protein sequence ID" value="ENSP00000354201.5"/>
    <property type="gene ID" value="ENSG00000159202.18"/>
</dbReference>
<dbReference type="GeneID" id="65264"/>
<dbReference type="KEGG" id="hsa:65264"/>
<dbReference type="MANE-Select" id="ENST00000360943.10">
    <property type="protein sequence ID" value="ENSP00000354201.5"/>
    <property type="RefSeq nucleotide sequence ID" value="NM_023079.5"/>
    <property type="RefSeq protein sequence ID" value="NP_075567.2"/>
</dbReference>
<dbReference type="UCSC" id="uc002ioi.4">
    <molecule id="Q9H832-1"/>
    <property type="organism name" value="human"/>
</dbReference>
<dbReference type="AGR" id="HGNC:25847"/>
<dbReference type="CTD" id="65264"/>
<dbReference type="DisGeNET" id="65264"/>
<dbReference type="GeneCards" id="UBE2Z"/>
<dbReference type="HGNC" id="HGNC:25847">
    <property type="gene designation" value="UBE2Z"/>
</dbReference>
<dbReference type="HPA" id="ENSG00000159202">
    <property type="expression patterns" value="Low tissue specificity"/>
</dbReference>
<dbReference type="MIM" id="611362">
    <property type="type" value="gene"/>
</dbReference>
<dbReference type="neXtProt" id="NX_Q9H832"/>
<dbReference type="OpenTargets" id="ENSG00000159202"/>
<dbReference type="PharmGKB" id="PA142670659"/>
<dbReference type="VEuPathDB" id="HostDB:ENSG00000159202"/>
<dbReference type="eggNOG" id="KOG0895">
    <property type="taxonomic scope" value="Eukaryota"/>
</dbReference>
<dbReference type="GeneTree" id="ENSGT00940000159091"/>
<dbReference type="HOGENOM" id="CLU_025097_2_0_1"/>
<dbReference type="InParanoid" id="Q9H832"/>
<dbReference type="OMA" id="KHQQENP"/>
<dbReference type="OrthoDB" id="47801at2759"/>
<dbReference type="PAN-GO" id="Q9H832">
    <property type="GO annotations" value="4 GO annotations based on evolutionary models"/>
</dbReference>
<dbReference type="PhylomeDB" id="Q9H832"/>
<dbReference type="TreeFam" id="TF354204"/>
<dbReference type="BRENDA" id="2.3.2.23">
    <property type="organism ID" value="2681"/>
</dbReference>
<dbReference type="PathwayCommons" id="Q9H832"/>
<dbReference type="Reactome" id="R-HSA-8866652">
    <property type="pathway name" value="Synthesis of active ubiquitin: roles of E1 and E2 enzymes"/>
</dbReference>
<dbReference type="Reactome" id="R-HSA-983168">
    <property type="pathway name" value="Antigen processing: Ubiquitination &amp; Proteasome degradation"/>
</dbReference>
<dbReference type="SignaLink" id="Q9H832"/>
<dbReference type="SIGNOR" id="Q9H832"/>
<dbReference type="UniPathway" id="UPA00143"/>
<dbReference type="BioGRID-ORCS" id="65264">
    <property type="hits" value="91 hits in 1158 CRISPR screens"/>
</dbReference>
<dbReference type="ChiTaRS" id="UBE2Z">
    <property type="organism name" value="human"/>
</dbReference>
<dbReference type="GenomeRNAi" id="65264"/>
<dbReference type="Pharos" id="Q9H832">
    <property type="development level" value="Tbio"/>
</dbReference>
<dbReference type="PRO" id="PR:Q9H832"/>
<dbReference type="Proteomes" id="UP000005640">
    <property type="component" value="Chromosome 17"/>
</dbReference>
<dbReference type="RNAct" id="Q9H832">
    <property type="molecule type" value="protein"/>
</dbReference>
<dbReference type="Bgee" id="ENSG00000159202">
    <property type="expression patterns" value="Expressed in islet of Langerhans and 205 other cell types or tissues"/>
</dbReference>
<dbReference type="ExpressionAtlas" id="Q9H832">
    <property type="expression patterns" value="baseline and differential"/>
</dbReference>
<dbReference type="GO" id="GO:0005829">
    <property type="term" value="C:cytosol"/>
    <property type="evidence" value="ECO:0000314"/>
    <property type="project" value="HPA"/>
</dbReference>
<dbReference type="GO" id="GO:0005654">
    <property type="term" value="C:nucleoplasm"/>
    <property type="evidence" value="ECO:0000314"/>
    <property type="project" value="HPA"/>
</dbReference>
<dbReference type="GO" id="GO:0005634">
    <property type="term" value="C:nucleus"/>
    <property type="evidence" value="ECO:0000314"/>
    <property type="project" value="UniProtKB"/>
</dbReference>
<dbReference type="GO" id="GO:0005524">
    <property type="term" value="F:ATP binding"/>
    <property type="evidence" value="ECO:0007669"/>
    <property type="project" value="UniProtKB-KW"/>
</dbReference>
<dbReference type="GO" id="GO:0060090">
    <property type="term" value="F:molecular adaptor activity"/>
    <property type="evidence" value="ECO:0000269"/>
    <property type="project" value="DisProt"/>
</dbReference>
<dbReference type="GO" id="GO:0061631">
    <property type="term" value="F:ubiquitin conjugating enzyme activity"/>
    <property type="evidence" value="ECO:0000318"/>
    <property type="project" value="GO_Central"/>
</dbReference>
<dbReference type="GO" id="GO:0006915">
    <property type="term" value="P:apoptotic process"/>
    <property type="evidence" value="ECO:0007669"/>
    <property type="project" value="UniProtKB-KW"/>
</dbReference>
<dbReference type="GO" id="GO:0043066">
    <property type="term" value="P:negative regulation of apoptotic process"/>
    <property type="evidence" value="ECO:0000318"/>
    <property type="project" value="GO_Central"/>
</dbReference>
<dbReference type="GO" id="GO:0043065">
    <property type="term" value="P:positive regulation of apoptotic process"/>
    <property type="evidence" value="ECO:0000314"/>
    <property type="project" value="UniProtKB"/>
</dbReference>
<dbReference type="GO" id="GO:0016567">
    <property type="term" value="P:protein ubiquitination"/>
    <property type="evidence" value="ECO:0007669"/>
    <property type="project" value="UniProtKB-UniPathway"/>
</dbReference>
<dbReference type="GO" id="GO:0006511">
    <property type="term" value="P:ubiquitin-dependent protein catabolic process"/>
    <property type="evidence" value="ECO:0007669"/>
    <property type="project" value="Ensembl"/>
</dbReference>
<dbReference type="CDD" id="cd23809">
    <property type="entry name" value="UBCc_UBE2Z"/>
    <property type="match status" value="1"/>
</dbReference>
<dbReference type="DisProt" id="DP00953"/>
<dbReference type="FunFam" id="3.10.110.10:FF:000046">
    <property type="entry name" value="Ubiquitin-conjugating enzyme E2 Z"/>
    <property type="match status" value="1"/>
</dbReference>
<dbReference type="Gene3D" id="3.10.110.10">
    <property type="entry name" value="Ubiquitin Conjugating Enzyme"/>
    <property type="match status" value="1"/>
</dbReference>
<dbReference type="InterPro" id="IPR000608">
    <property type="entry name" value="UBQ-conjugat_E2_core"/>
</dbReference>
<dbReference type="InterPro" id="IPR016135">
    <property type="entry name" value="UBQ-conjugating_enzyme/RWD"/>
</dbReference>
<dbReference type="PANTHER" id="PTHR46116">
    <property type="entry name" value="(E3-INDEPENDENT) E2 UBIQUITIN-CONJUGATING ENZYME"/>
    <property type="match status" value="1"/>
</dbReference>
<dbReference type="PANTHER" id="PTHR46116:SF26">
    <property type="entry name" value="UBIQUITIN-CONJUGATING ENZYME E2 Z"/>
    <property type="match status" value="1"/>
</dbReference>
<dbReference type="Pfam" id="PF00179">
    <property type="entry name" value="UQ_con"/>
    <property type="match status" value="1"/>
</dbReference>
<dbReference type="SMART" id="SM00212">
    <property type="entry name" value="UBCc"/>
    <property type="match status" value="1"/>
</dbReference>
<dbReference type="SUPFAM" id="SSF54495">
    <property type="entry name" value="UBC-like"/>
    <property type="match status" value="1"/>
</dbReference>
<dbReference type="PROSITE" id="PS50127">
    <property type="entry name" value="UBC_2"/>
    <property type="match status" value="1"/>
</dbReference>
<keyword id="KW-0002">3D-structure</keyword>
<keyword id="KW-0025">Alternative splicing</keyword>
<keyword id="KW-0053">Apoptosis</keyword>
<keyword id="KW-0067">ATP-binding</keyword>
<keyword id="KW-0963">Cytoplasm</keyword>
<keyword id="KW-0547">Nucleotide-binding</keyword>
<keyword id="KW-0539">Nucleus</keyword>
<keyword id="KW-0597">Phosphoprotein</keyword>
<keyword id="KW-1267">Proteomics identification</keyword>
<keyword id="KW-1185">Reference proteome</keyword>
<keyword id="KW-0808">Transferase</keyword>
<keyword id="KW-0833">Ubl conjugation pathway</keyword>
<comment type="function">
    <text evidence="2 5 6">Catalyzes the covalent attachment of ubiquitin to other proteins (By similarity). Specific substrate for UBA6, not charged with ubiquitin by UBE1. May be involved in apoptosis regulation.</text>
</comment>
<comment type="catalytic activity">
    <reaction evidence="2">
        <text>S-ubiquitinyl-[E1 ubiquitin-activating enzyme]-L-cysteine + [E2 ubiquitin-conjugating enzyme]-L-cysteine = [E1 ubiquitin-activating enzyme]-L-cysteine + S-ubiquitinyl-[E2 ubiquitin-conjugating enzyme]-L-cysteine.</text>
        <dbReference type="EC" id="2.3.2.23"/>
    </reaction>
</comment>
<comment type="pathway">
    <text evidence="2">Protein modification; protein ubiquitination.</text>
</comment>
<comment type="interaction">
    <interactant intactId="EBI-720977">
        <id>Q9H832</id>
    </interactant>
    <interactant intactId="EBI-8466265">
        <id>Q96MA6</id>
        <label>AK8</label>
    </interactant>
    <organismsDiffer>false</organismsDiffer>
    <experiments>3</experiments>
</comment>
<comment type="interaction">
    <interactant intactId="EBI-720977">
        <id>Q9H832</id>
    </interactant>
    <interactant intactId="EBI-356673">
        <id>P49368</id>
        <label>CCT3</label>
    </interactant>
    <organismsDiffer>false</organismsDiffer>
    <experiments>3</experiments>
</comment>
<comment type="interaction">
    <interactant intactId="EBI-720977">
        <id>Q9H832</id>
    </interactant>
    <interactant intactId="EBI-739467">
        <id>Q9H8Y8</id>
        <label>GORASP2</label>
    </interactant>
    <organismsDiffer>false</organismsDiffer>
    <experiments>3</experiments>
</comment>
<comment type="interaction">
    <interactant intactId="EBI-720977">
        <id>Q9H832</id>
    </interactant>
    <interactant intactId="EBI-2549423">
        <id>Q6NT76</id>
        <label>HMBOX1</label>
    </interactant>
    <organismsDiffer>false</organismsDiffer>
    <experiments>3</experiments>
</comment>
<comment type="interaction">
    <interactant intactId="EBI-720977">
        <id>Q9H832</id>
    </interactant>
    <interactant intactId="EBI-6509505">
        <id>Q0VD86</id>
        <label>INCA1</label>
    </interactant>
    <organismsDiffer>false</organismsDiffer>
    <experiments>3</experiments>
</comment>
<comment type="interaction">
    <interactant intactId="EBI-720977">
        <id>Q9H832</id>
    </interactant>
    <interactant intactId="EBI-1171228">
        <id>Q9Y2H5</id>
        <label>PLEKHA6</label>
    </interactant>
    <organismsDiffer>false</organismsDiffer>
    <experiments>3</experiments>
</comment>
<comment type="interaction">
    <interactant intactId="EBI-720977">
        <id>Q9H832</id>
    </interactant>
    <interactant intactId="EBI-742388">
        <id>Q9H8W4</id>
        <label>PLEKHF2</label>
    </interactant>
    <organismsDiffer>false</organismsDiffer>
    <experiments>9</experiments>
</comment>
<comment type="interaction">
    <interactant intactId="EBI-720977">
        <id>Q9H832</id>
    </interactant>
    <interactant intactId="EBI-307352">
        <id>Q04864</id>
        <label>REL</label>
    </interactant>
    <organismsDiffer>false</organismsDiffer>
    <experiments>3</experiments>
</comment>
<comment type="interaction">
    <interactant intactId="EBI-720977">
        <id>Q9H832</id>
    </interactant>
    <interactant intactId="EBI-2129889">
        <id>O75382</id>
        <label>TRIM3</label>
    </interactant>
    <organismsDiffer>false</organismsDiffer>
    <experiments>3</experiments>
</comment>
<comment type="interaction">
    <interactant intactId="EBI-720977">
        <id>Q9H832</id>
    </interactant>
    <interactant intactId="EBI-6657186">
        <id>O15205</id>
        <label>UBD</label>
    </interactant>
    <organismsDiffer>false</organismsDiffer>
    <experiments>2</experiments>
</comment>
<comment type="subcellular location">
    <subcellularLocation>
        <location evidence="4">Cytoplasm</location>
    </subcellularLocation>
    <subcellularLocation>
        <location evidence="4">Nucleus</location>
    </subcellularLocation>
</comment>
<comment type="alternative products">
    <event type="alternative splicing"/>
    <isoform>
        <id>Q9H832-1</id>
        <name>1</name>
        <sequence type="displayed"/>
    </isoform>
    <isoform>
        <id>Q9H832-2</id>
        <name>2</name>
        <sequence type="described" ref="VSP_023747"/>
    </isoform>
</comment>
<comment type="tissue specificity">
    <text evidence="4 6">Widely expressed. Highly in placenta, pancreas, spleen and testis.</text>
</comment>
<comment type="similarity">
    <text evidence="2">Belongs to the ubiquitin-conjugating enzyme family.</text>
</comment>
<comment type="sequence caution" evidence="8">
    <conflict type="erroneous initiation">
        <sequence resource="EMBL-CDS" id="AAH15890"/>
    </conflict>
</comment>
<comment type="sequence caution" evidence="8">
    <conflict type="erroneous initiation">
        <sequence resource="EMBL-CDS" id="BAB14724"/>
    </conflict>
</comment>
<name>UBE2Z_HUMAN</name>
<gene>
    <name type="primary">UBE2Z</name>
    <name type="ORF">HOYS7</name>
</gene>
<reference key="1">
    <citation type="journal article" date="2007" name="Nature">
        <title>Dual E1 activation systems for ubiquitin differentially regulate E2 enzyme charging.</title>
        <authorList>
            <person name="Jin J."/>
            <person name="Li X."/>
            <person name="Gygi S.P."/>
            <person name="Harper J.W."/>
        </authorList>
    </citation>
    <scope>NUCLEOTIDE SEQUENCE [MRNA] (ISOFORM 1)</scope>
    <scope>FUNCTION</scope>
    <scope>TISSUE SPECIFICITY</scope>
</reference>
<reference key="2">
    <citation type="journal article" date="2004" name="Nat. Genet.">
        <title>Complete sequencing and characterization of 21,243 full-length human cDNAs.</title>
        <authorList>
            <person name="Ota T."/>
            <person name="Suzuki Y."/>
            <person name="Nishikawa T."/>
            <person name="Otsuki T."/>
            <person name="Sugiyama T."/>
            <person name="Irie R."/>
            <person name="Wakamatsu A."/>
            <person name="Hayashi K."/>
            <person name="Sato H."/>
            <person name="Nagai K."/>
            <person name="Kimura K."/>
            <person name="Makita H."/>
            <person name="Sekine M."/>
            <person name="Obayashi M."/>
            <person name="Nishi T."/>
            <person name="Shibahara T."/>
            <person name="Tanaka T."/>
            <person name="Ishii S."/>
            <person name="Yamamoto J."/>
            <person name="Saito K."/>
            <person name="Kawai Y."/>
            <person name="Isono Y."/>
            <person name="Nakamura Y."/>
            <person name="Nagahari K."/>
            <person name="Murakami K."/>
            <person name="Yasuda T."/>
            <person name="Iwayanagi T."/>
            <person name="Wagatsuma M."/>
            <person name="Shiratori A."/>
            <person name="Sudo H."/>
            <person name="Hosoiri T."/>
            <person name="Kaku Y."/>
            <person name="Kodaira H."/>
            <person name="Kondo H."/>
            <person name="Sugawara M."/>
            <person name="Takahashi M."/>
            <person name="Kanda K."/>
            <person name="Yokoi T."/>
            <person name="Furuya T."/>
            <person name="Kikkawa E."/>
            <person name="Omura Y."/>
            <person name="Abe K."/>
            <person name="Kamihara K."/>
            <person name="Katsuta N."/>
            <person name="Sato K."/>
            <person name="Tanikawa M."/>
            <person name="Yamazaki M."/>
            <person name="Ninomiya K."/>
            <person name="Ishibashi T."/>
            <person name="Yamashita H."/>
            <person name="Murakawa K."/>
            <person name="Fujimori K."/>
            <person name="Tanai H."/>
            <person name="Kimata M."/>
            <person name="Watanabe M."/>
            <person name="Hiraoka S."/>
            <person name="Chiba Y."/>
            <person name="Ishida S."/>
            <person name="Ono Y."/>
            <person name="Takiguchi S."/>
            <person name="Watanabe S."/>
            <person name="Yosida M."/>
            <person name="Hotuta T."/>
            <person name="Kusano J."/>
            <person name="Kanehori K."/>
            <person name="Takahashi-Fujii A."/>
            <person name="Hara H."/>
            <person name="Tanase T.-O."/>
            <person name="Nomura Y."/>
            <person name="Togiya S."/>
            <person name="Komai F."/>
            <person name="Hara R."/>
            <person name="Takeuchi K."/>
            <person name="Arita M."/>
            <person name="Imose N."/>
            <person name="Musashino K."/>
            <person name="Yuuki H."/>
            <person name="Oshima A."/>
            <person name="Sasaki N."/>
            <person name="Aotsuka S."/>
            <person name="Yoshikawa Y."/>
            <person name="Matsunawa H."/>
            <person name="Ichihara T."/>
            <person name="Shiohata N."/>
            <person name="Sano S."/>
            <person name="Moriya S."/>
            <person name="Momiyama H."/>
            <person name="Satoh N."/>
            <person name="Takami S."/>
            <person name="Terashima Y."/>
            <person name="Suzuki O."/>
            <person name="Nakagawa S."/>
            <person name="Senoh A."/>
            <person name="Mizoguchi H."/>
            <person name="Goto Y."/>
            <person name="Shimizu F."/>
            <person name="Wakebe H."/>
            <person name="Hishigaki H."/>
            <person name="Watanabe T."/>
            <person name="Sugiyama A."/>
            <person name="Takemoto M."/>
            <person name="Kawakami B."/>
            <person name="Yamazaki M."/>
            <person name="Watanabe K."/>
            <person name="Kumagai A."/>
            <person name="Itakura S."/>
            <person name="Fukuzumi Y."/>
            <person name="Fujimori Y."/>
            <person name="Komiyama M."/>
            <person name="Tashiro H."/>
            <person name="Tanigami A."/>
            <person name="Fujiwara T."/>
            <person name="Ono T."/>
            <person name="Yamada K."/>
            <person name="Fujii Y."/>
            <person name="Ozaki K."/>
            <person name="Hirao M."/>
            <person name="Ohmori Y."/>
            <person name="Kawabata A."/>
            <person name="Hikiji T."/>
            <person name="Kobatake N."/>
            <person name="Inagaki H."/>
            <person name="Ikema Y."/>
            <person name="Okamoto S."/>
            <person name="Okitani R."/>
            <person name="Kawakami T."/>
            <person name="Noguchi S."/>
            <person name="Itoh T."/>
            <person name="Shigeta K."/>
            <person name="Senba T."/>
            <person name="Matsumura K."/>
            <person name="Nakajima Y."/>
            <person name="Mizuno T."/>
            <person name="Morinaga M."/>
            <person name="Sasaki M."/>
            <person name="Togashi T."/>
            <person name="Oyama M."/>
            <person name="Hata H."/>
            <person name="Watanabe M."/>
            <person name="Komatsu T."/>
            <person name="Mizushima-Sugano J."/>
            <person name="Satoh T."/>
            <person name="Shirai Y."/>
            <person name="Takahashi Y."/>
            <person name="Nakagawa K."/>
            <person name="Okumura K."/>
            <person name="Nagase T."/>
            <person name="Nomura N."/>
            <person name="Kikuchi H."/>
            <person name="Masuho Y."/>
            <person name="Yamashita R."/>
            <person name="Nakai K."/>
            <person name="Yada T."/>
            <person name="Nakamura Y."/>
            <person name="Ohara O."/>
            <person name="Isogai T."/>
            <person name="Sugano S."/>
        </authorList>
    </citation>
    <scope>NUCLEOTIDE SEQUENCE [LARGE SCALE MRNA] (ISOFORM 2)</scope>
    <source>
        <tissue>Retinoblastoma</tissue>
        <tissue>Thyroid</tissue>
    </source>
</reference>
<reference key="3">
    <citation type="journal article" date="2006" name="Nature">
        <title>DNA sequence of human chromosome 17 and analysis of rearrangement in the human lineage.</title>
        <authorList>
            <person name="Zody M.C."/>
            <person name="Garber M."/>
            <person name="Adams D.J."/>
            <person name="Sharpe T."/>
            <person name="Harrow J."/>
            <person name="Lupski J.R."/>
            <person name="Nicholson C."/>
            <person name="Searle S.M."/>
            <person name="Wilming L."/>
            <person name="Young S.K."/>
            <person name="Abouelleil A."/>
            <person name="Allen N.R."/>
            <person name="Bi W."/>
            <person name="Bloom T."/>
            <person name="Borowsky M.L."/>
            <person name="Bugalter B.E."/>
            <person name="Butler J."/>
            <person name="Chang J.L."/>
            <person name="Chen C.-K."/>
            <person name="Cook A."/>
            <person name="Corum B."/>
            <person name="Cuomo C.A."/>
            <person name="de Jong P.J."/>
            <person name="DeCaprio D."/>
            <person name="Dewar K."/>
            <person name="FitzGerald M."/>
            <person name="Gilbert J."/>
            <person name="Gibson R."/>
            <person name="Gnerre S."/>
            <person name="Goldstein S."/>
            <person name="Grafham D.V."/>
            <person name="Grocock R."/>
            <person name="Hafez N."/>
            <person name="Hagopian D.S."/>
            <person name="Hart E."/>
            <person name="Norman C.H."/>
            <person name="Humphray S."/>
            <person name="Jaffe D.B."/>
            <person name="Jones M."/>
            <person name="Kamal M."/>
            <person name="Khodiyar V.K."/>
            <person name="LaButti K."/>
            <person name="Laird G."/>
            <person name="Lehoczky J."/>
            <person name="Liu X."/>
            <person name="Lokyitsang T."/>
            <person name="Loveland J."/>
            <person name="Lui A."/>
            <person name="Macdonald P."/>
            <person name="Major J.E."/>
            <person name="Matthews L."/>
            <person name="Mauceli E."/>
            <person name="McCarroll S.A."/>
            <person name="Mihalev A.H."/>
            <person name="Mudge J."/>
            <person name="Nguyen C."/>
            <person name="Nicol R."/>
            <person name="O'Leary S.B."/>
            <person name="Osoegawa K."/>
            <person name="Schwartz D.C."/>
            <person name="Shaw-Smith C."/>
            <person name="Stankiewicz P."/>
            <person name="Steward C."/>
            <person name="Swarbreck D."/>
            <person name="Venkataraman V."/>
            <person name="Whittaker C.A."/>
            <person name="Yang X."/>
            <person name="Zimmer A.R."/>
            <person name="Bradley A."/>
            <person name="Hubbard T."/>
            <person name="Birren B.W."/>
            <person name="Rogers J."/>
            <person name="Lander E.S."/>
            <person name="Nusbaum C."/>
        </authorList>
    </citation>
    <scope>NUCLEOTIDE SEQUENCE [LARGE SCALE GENOMIC DNA]</scope>
</reference>
<reference key="4">
    <citation type="submission" date="2005-09" db="EMBL/GenBank/DDBJ databases">
        <authorList>
            <person name="Mural R.J."/>
            <person name="Istrail S."/>
            <person name="Sutton G.G."/>
            <person name="Florea L."/>
            <person name="Halpern A.L."/>
            <person name="Mobarry C.M."/>
            <person name="Lippert R."/>
            <person name="Walenz B."/>
            <person name="Shatkay H."/>
            <person name="Dew I."/>
            <person name="Miller J.R."/>
            <person name="Flanigan M.J."/>
            <person name="Edwards N.J."/>
            <person name="Bolanos R."/>
            <person name="Fasulo D."/>
            <person name="Halldorsson B.V."/>
            <person name="Hannenhalli S."/>
            <person name="Turner R."/>
            <person name="Yooseph S."/>
            <person name="Lu F."/>
            <person name="Nusskern D.R."/>
            <person name="Shue B.C."/>
            <person name="Zheng X.H."/>
            <person name="Zhong F."/>
            <person name="Delcher A.L."/>
            <person name="Huson D.H."/>
            <person name="Kravitz S.A."/>
            <person name="Mouchard L."/>
            <person name="Reinert K."/>
            <person name="Remington K.A."/>
            <person name="Clark A.G."/>
            <person name="Waterman M.S."/>
            <person name="Eichler E.E."/>
            <person name="Adams M.D."/>
            <person name="Hunkapiller M.W."/>
            <person name="Myers E.W."/>
            <person name="Venter J.C."/>
        </authorList>
    </citation>
    <scope>NUCLEOTIDE SEQUENCE [LARGE SCALE GENOMIC DNA]</scope>
</reference>
<reference key="5">
    <citation type="journal article" date="2004" name="Genome Res.">
        <title>The status, quality, and expansion of the NIH full-length cDNA project: the Mammalian Gene Collection (MGC).</title>
        <authorList>
            <consortium name="The MGC Project Team"/>
        </authorList>
    </citation>
    <scope>NUCLEOTIDE SEQUENCE [LARGE SCALE MRNA] (ISOFORM 1)</scope>
    <source>
        <tissue>Skin</tissue>
    </source>
</reference>
<reference key="6">
    <citation type="submission" date="1999-03" db="EMBL/GenBank/DDBJ databases">
        <title>Molecular cloning of an osteocyte derived gene.</title>
        <authorList>
            <person name="Ikeda A."/>
            <person name="Turitani K."/>
        </authorList>
    </citation>
    <scope>NUCLEOTIDE SEQUENCE [MRNA] OF 109-354</scope>
</reference>
<reference key="7">
    <citation type="submission" date="2004-06" db="EMBL/GenBank/DDBJ databases">
        <title>Cloning of human full open reading frames in Gateway(TM) system entry vector (pDONR201).</title>
        <authorList>
            <person name="Ebert L."/>
            <person name="Schick M."/>
            <person name="Neubert P."/>
            <person name="Schatten R."/>
            <person name="Henze S."/>
            <person name="Korn B."/>
        </authorList>
    </citation>
    <scope>NUCLEOTIDE SEQUENCE [LARGE SCALE MRNA] OF 109-354</scope>
</reference>
<reference key="8">
    <citation type="journal article" date="2007" name="BMC Genomics">
        <title>The full-ORF clone resource of the German cDNA consortium.</title>
        <authorList>
            <person name="Bechtel S."/>
            <person name="Rosenfelder H."/>
            <person name="Duda A."/>
            <person name="Schmidt C.P."/>
            <person name="Ernst U."/>
            <person name="Wellenreuther R."/>
            <person name="Mehrle A."/>
            <person name="Schuster C."/>
            <person name="Bahr A."/>
            <person name="Bloecker H."/>
            <person name="Heubner D."/>
            <person name="Hoerlein A."/>
            <person name="Michel G."/>
            <person name="Wedler H."/>
            <person name="Koehrer K."/>
            <person name="Ottenwaelder B."/>
            <person name="Poustka A."/>
            <person name="Wiemann S."/>
            <person name="Schupp I."/>
        </authorList>
    </citation>
    <scope>NUCLEOTIDE SEQUENCE [LARGE SCALE MRNA] OF 238-354</scope>
    <source>
        <tissue>Brain</tissue>
        <tissue>Pancreas</tissue>
    </source>
</reference>
<reference key="9">
    <citation type="journal article" date="2007" name="Mol. Biol. Rep.">
        <title>Cloning and characterization of a gene encoding the human putative ubiquitin conjugating enzyme E2Z (UBE2Z).</title>
        <authorList>
            <person name="Gu X."/>
            <person name="Zhao F."/>
            <person name="Zheng M."/>
            <person name="Fei X."/>
            <person name="Chen X."/>
            <person name="Huang S."/>
            <person name="Xie Y."/>
            <person name="Mao Y."/>
        </authorList>
    </citation>
    <scope>SUBCELLULAR LOCATION</scope>
    <scope>TISSUE SPECIFICITY</scope>
</reference>
<reference key="10">
    <citation type="journal article" date="2007" name="Mol. Cells">
        <title>Identification of novel regulators of apoptosis using a high-throughput cell-based screen.</title>
        <authorList>
            <person name="Park K.M."/>
            <person name="Kang E."/>
            <person name="Jeon Y.-J."/>
            <person name="Kim N."/>
            <person name="Kim N.-S."/>
            <person name="Yoo H.-S."/>
            <person name="Yeom Y.I."/>
            <person name="Kim S.J."/>
        </authorList>
    </citation>
    <scope>FUNCTION</scope>
</reference>
<reference key="11">
    <citation type="journal article" date="2011" name="BMC Syst. Biol.">
        <title>Initial characterization of the human central proteome.</title>
        <authorList>
            <person name="Burkard T.R."/>
            <person name="Planyavsky M."/>
            <person name="Kaupe I."/>
            <person name="Breitwieser F.P."/>
            <person name="Buerckstuemmer T."/>
            <person name="Bennett K.L."/>
            <person name="Superti-Furga G."/>
            <person name="Colinge J."/>
        </authorList>
    </citation>
    <scope>IDENTIFICATION BY MASS SPECTROMETRY [LARGE SCALE ANALYSIS]</scope>
</reference>
<proteinExistence type="evidence at protein level"/>